<name>Y1960_ACIBY</name>
<feature type="chain" id="PRO_0000375269" description="YcgL domain-containing protein ABAYE1960">
    <location>
        <begin position="1"/>
        <end position="101"/>
    </location>
</feature>
<feature type="domain" description="YcgL" evidence="1">
    <location>
        <begin position="1"/>
        <end position="92"/>
    </location>
</feature>
<organism>
    <name type="scientific">Acinetobacter baumannii (strain AYE)</name>
    <dbReference type="NCBI Taxonomy" id="509173"/>
    <lineage>
        <taxon>Bacteria</taxon>
        <taxon>Pseudomonadati</taxon>
        <taxon>Pseudomonadota</taxon>
        <taxon>Gammaproteobacteria</taxon>
        <taxon>Moraxellales</taxon>
        <taxon>Moraxellaceae</taxon>
        <taxon>Acinetobacter</taxon>
        <taxon>Acinetobacter calcoaceticus/baumannii complex</taxon>
    </lineage>
</organism>
<dbReference type="EMBL" id="CU459141">
    <property type="protein sequence ID" value="CAM86839.1"/>
    <property type="molecule type" value="Genomic_DNA"/>
</dbReference>
<dbReference type="RefSeq" id="WP_000543500.1">
    <property type="nucleotide sequence ID" value="NZ_JBDGFB010000001.1"/>
</dbReference>
<dbReference type="SMR" id="B0VDY4"/>
<dbReference type="EnsemblBacteria" id="CAM86839">
    <property type="protein sequence ID" value="CAM86839"/>
    <property type="gene ID" value="ABAYE1960"/>
</dbReference>
<dbReference type="KEGG" id="aby:ABAYE1960"/>
<dbReference type="HOGENOM" id="CLU_155118_0_1_6"/>
<dbReference type="Gene3D" id="3.10.510.20">
    <property type="entry name" value="YcgL domain"/>
    <property type="match status" value="1"/>
</dbReference>
<dbReference type="HAMAP" id="MF_01866">
    <property type="entry name" value="UPF0745"/>
    <property type="match status" value="1"/>
</dbReference>
<dbReference type="InterPro" id="IPR038068">
    <property type="entry name" value="YcgL-like_sf"/>
</dbReference>
<dbReference type="InterPro" id="IPR027354">
    <property type="entry name" value="YcgL_dom"/>
</dbReference>
<dbReference type="PANTHER" id="PTHR38109">
    <property type="entry name" value="PROTEIN YCGL"/>
    <property type="match status" value="1"/>
</dbReference>
<dbReference type="PANTHER" id="PTHR38109:SF1">
    <property type="entry name" value="PROTEIN YCGL"/>
    <property type="match status" value="1"/>
</dbReference>
<dbReference type="Pfam" id="PF05166">
    <property type="entry name" value="YcgL"/>
    <property type="match status" value="1"/>
</dbReference>
<dbReference type="SUPFAM" id="SSF160191">
    <property type="entry name" value="YcgL-like"/>
    <property type="match status" value="1"/>
</dbReference>
<dbReference type="PROSITE" id="PS51648">
    <property type="entry name" value="YCGL"/>
    <property type="match status" value="1"/>
</dbReference>
<gene>
    <name type="ordered locus">ABAYE1960</name>
</gene>
<evidence type="ECO:0000255" key="1">
    <source>
        <dbReference type="HAMAP-Rule" id="MF_01866"/>
    </source>
</evidence>
<reference key="1">
    <citation type="journal article" date="2008" name="PLoS ONE">
        <title>Comparative analysis of Acinetobacters: three genomes for three lifestyles.</title>
        <authorList>
            <person name="Vallenet D."/>
            <person name="Nordmann P."/>
            <person name="Barbe V."/>
            <person name="Poirel L."/>
            <person name="Mangenot S."/>
            <person name="Bataille E."/>
            <person name="Dossat C."/>
            <person name="Gas S."/>
            <person name="Kreimeyer A."/>
            <person name="Lenoble P."/>
            <person name="Oztas S."/>
            <person name="Poulain J."/>
            <person name="Segurens B."/>
            <person name="Robert C."/>
            <person name="Abergel C."/>
            <person name="Claverie J.-M."/>
            <person name="Raoult D."/>
            <person name="Medigue C."/>
            <person name="Weissenbach J."/>
            <person name="Cruveiller S."/>
        </authorList>
    </citation>
    <scope>NUCLEOTIDE SEQUENCE [LARGE SCALE GENOMIC DNA]</scope>
    <source>
        <strain>AYE</strain>
    </source>
</reference>
<accession>B0VDY4</accession>
<protein>
    <recommendedName>
        <fullName evidence="1">YcgL domain-containing protein ABAYE1960</fullName>
    </recommendedName>
</protein>
<sequence length="101" mass="11473">MHCDIYRSSKKDEMYIYIARPNYPDETEQADPFEKVPEAVLQAFGRATFVMHLELAPTRKLARVNVLHVLDSLQTKGFFIQMPPEGLINPNAVEPEGLRGA</sequence>
<proteinExistence type="inferred from homology"/>